<gene>
    <name evidence="5" type="primary">fruK</name>
    <name type="synonym">fpk</name>
    <name type="ordered locus">b2168</name>
    <name type="ordered locus">JW2155</name>
</gene>
<protein>
    <recommendedName>
        <fullName evidence="6">1-phosphofructokinase</fullName>
        <ecNumber evidence="2 3">2.7.1.56</ecNumber>
    </recommendedName>
    <alternativeName>
        <fullName evidence="4">Fructose 1-phosphate kinase</fullName>
        <shortName evidence="4">Fru1PK</shortName>
    </alternativeName>
</protein>
<accession>P0AEW9</accession>
<accession>P23539</accession>
<comment type="function">
    <text evidence="2 3">Catalyzes the ATP-dependent phosphorylation of fructose-l-phosphate to fructose-l,6-bisphosphate (PubMed:10833389, Ref.6). Is specific for fructose-l-phosphate (Ref.6). GTP, UTP and CTP can also function as phosphoryl donors showing 60%, 20% and 10% of the activity of ATP (Ref.6).</text>
</comment>
<comment type="catalytic activity">
    <reaction evidence="2 3">
        <text>beta-D-fructose 1-phosphate + ATP = beta-D-fructose 1,6-bisphosphate + ADP + H(+)</text>
        <dbReference type="Rhea" id="RHEA:14213"/>
        <dbReference type="ChEBI" id="CHEBI:15378"/>
        <dbReference type="ChEBI" id="CHEBI:30616"/>
        <dbReference type="ChEBI" id="CHEBI:32966"/>
        <dbReference type="ChEBI" id="CHEBI:138881"/>
        <dbReference type="ChEBI" id="CHEBI:456216"/>
        <dbReference type="EC" id="2.7.1.56"/>
    </reaction>
</comment>
<comment type="cofactor">
    <cofactor evidence="3">
        <name>Mg(2+)</name>
        <dbReference type="ChEBI" id="CHEBI:18420"/>
    </cofactor>
    <text evidence="3">Can also use Mn(2+) or Co(2+), with lower efficiency.</text>
</comment>
<comment type="activity regulation">
    <text evidence="2 3">Activity is markedly stimulated by KCl (PubMed:10833389). Reversibly inhibited by fructose-1,6- bisphosphate and ADP. Irreversibly inhibited by phenylmethanesulfonyl fluoride (PMSF) (Ref.6).</text>
</comment>
<comment type="biophysicochemical properties">
    <kinetics>
        <KM evidence="3">0.25 mM for fructose 1-phosphate</KM>
        <KM evidence="2">0.36 mM for fructose 1-phosphate (in the absence of KCl)</KM>
        <KM evidence="2">0.125 mM for fructose 1-phosphate (in the presence of 50 mM KCl)</KM>
        <KM evidence="3">0.12 mM for ATP</KM>
        <KM evidence="2">0.35 mM for ATP (in the presence of 5 mM KCl)</KM>
        <KM evidence="2">0.6 mM for ATP (in the presence of 50 mM KCl)</KM>
    </kinetics>
    <phDependence>
        <text evidence="3">Optimum pH is 7.8 in 50 mM Tris-HC1 and 8.5 in 50 mM NH(4)HCO(3).</text>
    </phDependence>
</comment>
<comment type="subunit">
    <text evidence="3">Homodimer.</text>
</comment>
<comment type="similarity">
    <text evidence="7">Belongs to the carbohydrate kinase PfkB family.</text>
</comment>
<reference key="1">
    <citation type="journal article" date="1990" name="Proc. R. Soc. B">
        <title>Sequence similarities between the gene specifying 1-phosphofructokinase (fruK), genes specifying other kinases in Escherichia coli K12, and lacC of Staphylococcus aureus.</title>
        <authorList>
            <person name="Orchard L.M.D."/>
            <person name="Kornberg H.L."/>
        </authorList>
    </citation>
    <scope>NUCLEOTIDE SEQUENCE [GENOMIC DNA]</scope>
    <source>
        <strain>K12</strain>
    </source>
</reference>
<reference key="2">
    <citation type="submission" date="1993-10" db="EMBL/GenBank/DDBJ databases">
        <authorList>
            <person name="Richterich P."/>
            <person name="Lakey N."/>
            <person name="Gryan G."/>
            <person name="Jaehn L."/>
            <person name="Mintz L."/>
            <person name="Robison K."/>
            <person name="Church G.M."/>
        </authorList>
    </citation>
    <scope>NUCLEOTIDE SEQUENCE [GENOMIC DNA]</scope>
    <source>
        <strain>K12 / BHB2600</strain>
    </source>
</reference>
<reference key="3">
    <citation type="journal article" date="1996" name="DNA Res.">
        <title>A 460-kb DNA sequence of the Escherichia coli K-12 genome corresponding to the 40.1-50.0 min region on the linkage map.</title>
        <authorList>
            <person name="Itoh T."/>
            <person name="Aiba H."/>
            <person name="Baba T."/>
            <person name="Fujita K."/>
            <person name="Hayashi K."/>
            <person name="Inada T."/>
            <person name="Isono K."/>
            <person name="Kasai H."/>
            <person name="Kimura S."/>
            <person name="Kitakawa M."/>
            <person name="Kitagawa M."/>
            <person name="Makino K."/>
            <person name="Miki T."/>
            <person name="Mizobuchi K."/>
            <person name="Mori H."/>
            <person name="Mori T."/>
            <person name="Motomura K."/>
            <person name="Nakade S."/>
            <person name="Nakamura Y."/>
            <person name="Nashimoto H."/>
            <person name="Nishio Y."/>
            <person name="Oshima T."/>
            <person name="Saito N."/>
            <person name="Sampei G."/>
            <person name="Seki Y."/>
            <person name="Sivasundaram S."/>
            <person name="Tagami H."/>
            <person name="Takeda J."/>
            <person name="Takemoto K."/>
            <person name="Wada C."/>
            <person name="Yamamoto Y."/>
            <person name="Horiuchi T."/>
        </authorList>
    </citation>
    <scope>NUCLEOTIDE SEQUENCE [LARGE SCALE GENOMIC DNA]</scope>
    <source>
        <strain>K12 / W3110 / ATCC 27325 / DSM 5911</strain>
    </source>
</reference>
<reference key="4">
    <citation type="journal article" date="1997" name="Science">
        <title>The complete genome sequence of Escherichia coli K-12.</title>
        <authorList>
            <person name="Blattner F.R."/>
            <person name="Plunkett G. III"/>
            <person name="Bloch C.A."/>
            <person name="Perna N.T."/>
            <person name="Burland V."/>
            <person name="Riley M."/>
            <person name="Collado-Vides J."/>
            <person name="Glasner J.D."/>
            <person name="Rode C.K."/>
            <person name="Mayhew G.F."/>
            <person name="Gregor J."/>
            <person name="Davis N.W."/>
            <person name="Kirkpatrick H.A."/>
            <person name="Goeden M.A."/>
            <person name="Rose D.J."/>
            <person name="Mau B."/>
            <person name="Shao Y."/>
        </authorList>
    </citation>
    <scope>NUCLEOTIDE SEQUENCE [LARGE SCALE GENOMIC DNA]</scope>
    <source>
        <strain>K12 / MG1655 / ATCC 47076</strain>
    </source>
</reference>
<reference key="5">
    <citation type="journal article" date="2006" name="Mol. Syst. Biol.">
        <title>Highly accurate genome sequences of Escherichia coli K-12 strains MG1655 and W3110.</title>
        <authorList>
            <person name="Hayashi K."/>
            <person name="Morooka N."/>
            <person name="Yamamoto Y."/>
            <person name="Fujita K."/>
            <person name="Isono K."/>
            <person name="Choi S."/>
            <person name="Ohtsubo E."/>
            <person name="Baba T."/>
            <person name="Wanner B.L."/>
            <person name="Mori H."/>
            <person name="Horiuchi T."/>
        </authorList>
    </citation>
    <scope>NUCLEOTIDE SEQUENCE [LARGE SCALE GENOMIC DNA]</scope>
    <source>
        <strain>K12 / W3110 / ATCC 27325 / DSM 5911</strain>
    </source>
</reference>
<reference key="6">
    <citation type="journal article" date="1985" name="FEMS Microbiol. Lett.">
        <title>Purification and properties of 1-phosphofructokinase from Escherichia coli.</title>
        <authorList>
            <person name="Buschmeier B."/>
            <person name="Hengstenberg W."/>
            <person name="Deutscher J."/>
        </authorList>
    </citation>
    <scope>FUNCTION</scope>
    <scope>CATALYTIC ACTIVITY</scope>
    <scope>COFACTOR</scope>
    <scope>ACTIVITY REGULATION</scope>
    <scope>BIOPHYSICOCHEMICAL PROPERTIES</scope>
    <scope>SUBUNIT</scope>
    <source>
        <strain>K12 / jOD5</strain>
    </source>
</reference>
<reference key="7">
    <citation type="journal article" date="2000" name="Protein Expr. Purif.">
        <title>Overexpression and purification of fructose-1-phosphate kinase from Escherichia coli: application to the assay of fructose 1-phosphate.</title>
        <authorList>
            <person name="Veiga-da-Cunha M."/>
            <person name="Hoyoux A."/>
            <person name="Van Schaftingen E."/>
            <person name="Houyoux A."/>
        </authorList>
    </citation>
    <scope>FUNCTION</scope>
    <scope>CATALYTIC ACTIVITY</scope>
    <scope>ACTIVITY REGULATION</scope>
    <scope>BIOPHYSICOCHEMICAL PROPERTIES</scope>
    <source>
        <strain>K12 / JM109 / ATCC 53323</strain>
    </source>
</reference>
<sequence length="312" mass="33756">MSRRVATITLNPAYDLVGFCPEIERGEVNLVKTTGLHAAGKGINVAKVLKDLGIDVTVGGFLGKDNQDGFQQLFSELGIANRFQVVQGRTRINVKLTEKDGEVTDFNFSGFEVTPADWERFVTDSLSWLGQFDMVCVSGSLPSGVSPEAFTDWMTRLRSQCPCIIFDSSREALVAGLKAAPWLVKPNRRELEIWAGRKLPEMKDVIEAAHALREQGIAHVVISLGAEGALWVNASGEWIAKPPSVDVVSTVGAGDSMVGGLIYGLLMRESSEHTLRLATAVAALAVSQSNVGITDRPQLAAMMARVDLQPFN</sequence>
<name>K1PF_ECOLI</name>
<organism>
    <name type="scientific">Escherichia coli (strain K12)</name>
    <dbReference type="NCBI Taxonomy" id="83333"/>
    <lineage>
        <taxon>Bacteria</taxon>
        <taxon>Pseudomonadati</taxon>
        <taxon>Pseudomonadota</taxon>
        <taxon>Gammaproteobacteria</taxon>
        <taxon>Enterobacterales</taxon>
        <taxon>Enterobacteriaceae</taxon>
        <taxon>Escherichia</taxon>
    </lineage>
</organism>
<dbReference type="EC" id="2.7.1.56" evidence="2 3"/>
<dbReference type="EMBL" id="X53948">
    <property type="protein sequence ID" value="CAA37896.1"/>
    <property type="molecule type" value="Genomic_DNA"/>
</dbReference>
<dbReference type="EMBL" id="U00007">
    <property type="protein sequence ID" value="AAA60525.1"/>
    <property type="molecule type" value="Genomic_DNA"/>
</dbReference>
<dbReference type="EMBL" id="U00096">
    <property type="protein sequence ID" value="AAC75229.1"/>
    <property type="molecule type" value="Genomic_DNA"/>
</dbReference>
<dbReference type="EMBL" id="AP009048">
    <property type="protein sequence ID" value="BAA15977.1"/>
    <property type="molecule type" value="Genomic_DNA"/>
</dbReference>
<dbReference type="PIR" id="B37245">
    <property type="entry name" value="B37245"/>
</dbReference>
<dbReference type="RefSeq" id="NP_416673.1">
    <property type="nucleotide sequence ID" value="NC_000913.3"/>
</dbReference>
<dbReference type="RefSeq" id="WP_000091263.1">
    <property type="nucleotide sequence ID" value="NZ_STEB01000002.1"/>
</dbReference>
<dbReference type="SMR" id="P0AEW9"/>
<dbReference type="BioGRID" id="4262911">
    <property type="interactions" value="25"/>
</dbReference>
<dbReference type="FunCoup" id="P0AEW9">
    <property type="interactions" value="110"/>
</dbReference>
<dbReference type="IntAct" id="P0AEW9">
    <property type="interactions" value="2"/>
</dbReference>
<dbReference type="STRING" id="511145.b2168"/>
<dbReference type="jPOST" id="P0AEW9"/>
<dbReference type="PaxDb" id="511145-b2168"/>
<dbReference type="EnsemblBacteria" id="AAC75229">
    <property type="protein sequence ID" value="AAC75229"/>
    <property type="gene ID" value="b2168"/>
</dbReference>
<dbReference type="GeneID" id="75206421"/>
<dbReference type="GeneID" id="946676"/>
<dbReference type="KEGG" id="ecj:JW2155"/>
<dbReference type="KEGG" id="eco:b2168"/>
<dbReference type="KEGG" id="ecoc:C3026_12145"/>
<dbReference type="PATRIC" id="fig|1411691.4.peg.71"/>
<dbReference type="EchoBASE" id="EB0333"/>
<dbReference type="eggNOG" id="COG1105">
    <property type="taxonomic scope" value="Bacteria"/>
</dbReference>
<dbReference type="HOGENOM" id="CLU_050013_0_1_6"/>
<dbReference type="InParanoid" id="P0AEW9"/>
<dbReference type="OMA" id="KPYMIKP"/>
<dbReference type="OrthoDB" id="9801219at2"/>
<dbReference type="PhylomeDB" id="P0AEW9"/>
<dbReference type="BioCyc" id="EcoCyc:1-PFK-MONOMER"/>
<dbReference type="BioCyc" id="MetaCyc:1-PFK-MONOMER"/>
<dbReference type="PRO" id="PR:P0AEW9"/>
<dbReference type="Proteomes" id="UP000000625">
    <property type="component" value="Chromosome"/>
</dbReference>
<dbReference type="GO" id="GO:0005829">
    <property type="term" value="C:cytosol"/>
    <property type="evidence" value="ECO:0000318"/>
    <property type="project" value="GO_Central"/>
</dbReference>
<dbReference type="GO" id="GO:0008662">
    <property type="term" value="F:1-phosphofructokinase activity"/>
    <property type="evidence" value="ECO:0000314"/>
    <property type="project" value="EcoCyc"/>
</dbReference>
<dbReference type="GO" id="GO:0005524">
    <property type="term" value="F:ATP binding"/>
    <property type="evidence" value="ECO:0007669"/>
    <property type="project" value="UniProtKB-KW"/>
</dbReference>
<dbReference type="GO" id="GO:0008443">
    <property type="term" value="F:phosphofructokinase activity"/>
    <property type="evidence" value="ECO:0000318"/>
    <property type="project" value="GO_Central"/>
</dbReference>
<dbReference type="GO" id="GO:0006001">
    <property type="term" value="P:fructose catabolic process"/>
    <property type="evidence" value="ECO:0000315"/>
    <property type="project" value="EcoCyc"/>
</dbReference>
<dbReference type="CDD" id="cd01164">
    <property type="entry name" value="FruK_PfkB_like"/>
    <property type="match status" value="1"/>
</dbReference>
<dbReference type="FunFam" id="3.40.1190.20:FF:000001">
    <property type="entry name" value="Phosphofructokinase"/>
    <property type="match status" value="1"/>
</dbReference>
<dbReference type="Gene3D" id="3.40.1190.20">
    <property type="match status" value="1"/>
</dbReference>
<dbReference type="InterPro" id="IPR022463">
    <property type="entry name" value="1-PFruKinase"/>
</dbReference>
<dbReference type="InterPro" id="IPR002173">
    <property type="entry name" value="Carboh/pur_kinase_PfkB_CS"/>
</dbReference>
<dbReference type="InterPro" id="IPR011611">
    <property type="entry name" value="PfkB_dom"/>
</dbReference>
<dbReference type="InterPro" id="IPR029056">
    <property type="entry name" value="Ribokinase-like"/>
</dbReference>
<dbReference type="InterPro" id="IPR017583">
    <property type="entry name" value="Tagatose/fructose_Pkinase"/>
</dbReference>
<dbReference type="NCBIfam" id="TIGR03168">
    <property type="entry name" value="1-PFK"/>
    <property type="match status" value="1"/>
</dbReference>
<dbReference type="NCBIfam" id="TIGR03828">
    <property type="entry name" value="pfkB"/>
    <property type="match status" value="1"/>
</dbReference>
<dbReference type="NCBIfam" id="NF007068">
    <property type="entry name" value="PRK09513.1"/>
    <property type="match status" value="1"/>
</dbReference>
<dbReference type="PANTHER" id="PTHR46566:SF5">
    <property type="entry name" value="1-PHOSPHOFRUCTOKINASE"/>
    <property type="match status" value="1"/>
</dbReference>
<dbReference type="PANTHER" id="PTHR46566">
    <property type="entry name" value="1-PHOSPHOFRUCTOKINASE-RELATED"/>
    <property type="match status" value="1"/>
</dbReference>
<dbReference type="Pfam" id="PF00294">
    <property type="entry name" value="PfkB"/>
    <property type="match status" value="1"/>
</dbReference>
<dbReference type="PIRSF" id="PIRSF000535">
    <property type="entry name" value="1PFK/6PFK/LacC"/>
    <property type="match status" value="1"/>
</dbReference>
<dbReference type="SUPFAM" id="SSF53613">
    <property type="entry name" value="Ribokinase-like"/>
    <property type="match status" value="1"/>
</dbReference>
<dbReference type="PROSITE" id="PS00583">
    <property type="entry name" value="PFKB_KINASES_1"/>
    <property type="match status" value="1"/>
</dbReference>
<dbReference type="PROSITE" id="PS00584">
    <property type="entry name" value="PFKB_KINASES_2"/>
    <property type="match status" value="1"/>
</dbReference>
<feature type="chain" id="PRO_0000080076" description="1-phosphofructokinase">
    <location>
        <begin position="1"/>
        <end position="312"/>
    </location>
</feature>
<feature type="active site" description="Proton acceptor" evidence="1">
    <location>
        <position position="255"/>
    </location>
</feature>
<feature type="binding site" evidence="1">
    <location>
        <begin position="223"/>
        <end position="228"/>
    </location>
    <ligand>
        <name>ATP</name>
        <dbReference type="ChEBI" id="CHEBI:30616"/>
    </ligand>
</feature>
<feature type="binding site" evidence="1">
    <location>
        <begin position="254"/>
        <end position="255"/>
    </location>
    <ligand>
        <name>ATP</name>
        <dbReference type="ChEBI" id="CHEBI:30616"/>
    </ligand>
</feature>
<proteinExistence type="evidence at protein level"/>
<keyword id="KW-0067">ATP-binding</keyword>
<keyword id="KW-0418">Kinase</keyword>
<keyword id="KW-0460">Magnesium</keyword>
<keyword id="KW-0547">Nucleotide-binding</keyword>
<keyword id="KW-1185">Reference proteome</keyword>
<keyword id="KW-0808">Transferase</keyword>
<evidence type="ECO:0000250" key="1">
    <source>
        <dbReference type="UniProtKB" id="P0A9J6"/>
    </source>
</evidence>
<evidence type="ECO:0000269" key="2">
    <source>
    </source>
</evidence>
<evidence type="ECO:0000269" key="3">
    <source ref="6"/>
</evidence>
<evidence type="ECO:0000303" key="4">
    <source>
    </source>
</evidence>
<evidence type="ECO:0000303" key="5">
    <source>
    </source>
</evidence>
<evidence type="ECO:0000303" key="6">
    <source ref="6"/>
</evidence>
<evidence type="ECO:0000305" key="7"/>